<protein>
    <recommendedName>
        <fullName>Nuclear inhibitor of protein phosphatase 1</fullName>
        <shortName>NIPP-1</shortName>
    </recommendedName>
    <alternativeName>
        <fullName>Protein phosphatase 1 regulatory inhibitor subunit 8</fullName>
    </alternativeName>
</protein>
<reference key="1">
    <citation type="journal article" date="1995" name="J. Biol. Chem.">
        <title>Molecular cloning of NIPP-1, a nuclear inhibitor of protein phosphatase-1, reveals homology with polypeptides involved in RNA processing.</title>
        <authorList>
            <person name="Van Eynde A."/>
            <person name="Wera S."/>
            <person name="Beullens M."/>
            <person name="Torrekens S."/>
            <person name="Van Leuven F."/>
            <person name="Stalmans W."/>
            <person name="Bollen M."/>
        </authorList>
    </citation>
    <scope>NUCLEOTIDE SEQUENCE [MRNA]</scope>
    <scope>ALTERNATIVE SPLICING</scope>
    <scope>PROTEIN SEQUENCE OF 163-171 AND 196-208</scope>
    <scope>BLOCKAGE OF N-TERMINUS</scope>
    <scope>SUBCELLULAR LOCATION</scope>
    <scope>PHOSPHORYLATION AT SER-199</scope>
    <source>
        <tissue>Thymus</tissue>
    </source>
</reference>
<reference key="2">
    <citation type="journal article" date="1997" name="J. Biol. Chem.">
        <title>Properties and phosphorylation sites of baculovirus-expressed nuclear inhibitor of protein phosphatase-1 (NIPP-1).</title>
        <authorList>
            <person name="Vulsteke V."/>
            <person name="Beullens M."/>
            <person name="Waelkens E."/>
            <person name="Stalmans W."/>
            <person name="Bollen M."/>
        </authorList>
    </citation>
    <scope>PROTEIN SEQUENCE OF 152-191 AND 197-221</scope>
    <scope>CHARACTERIZATION</scope>
    <scope>PHOSPHORYLATION AT THR-161; SER-178; SER-199 AND SER-204</scope>
    <scope>LACK OF PHOSPHORYLATION AT THR-202 AND THR-346</scope>
    <scope>MASS SPECTROMETRY</scope>
</reference>
<reference key="3">
    <citation type="journal article" date="1997" name="J. Biol. Chem.">
        <title>NIPP-1, a nuclear inhibitory subunit of protein phosphatase-1, has RNA-binding properties.</title>
        <authorList>
            <person name="Jagiello I."/>
            <person name="Beullens M."/>
            <person name="Vulsteke V."/>
            <person name="Wera S."/>
            <person name="Sohlberg B."/>
            <person name="Stalmans W."/>
            <person name="von Gabain A."/>
            <person name="Bollen M."/>
        </authorList>
    </citation>
    <scope>RNA-BINDING</scope>
    <scope>FUNCTION</scope>
</reference>
<reference key="4">
    <citation type="journal article" date="1999" name="J. Biol. Chem.">
        <title>Molecular determinants of nuclear protein phosphatase-1 regulation by NIPP-1.</title>
        <authorList>
            <person name="Beullens M."/>
            <person name="Van Eynde A."/>
            <person name="Vulsteke V."/>
            <person name="Connor J."/>
            <person name="Shenolikar S."/>
            <person name="Stalmans W."/>
            <person name="Bollen M."/>
        </authorList>
    </citation>
    <scope>DOMAIN PP-1 BINDING</scope>
    <scope>SYNTHESIS OF PEPTIDES IN THE 141-230 REGION</scope>
    <scope>PHOSPHORYLATION AT SER-204</scope>
</reference>
<comment type="function">
    <text evidence="7">Inhibitor subunit of the major nuclear protein phosphatase-1 (PP-1). It has RNA-binding activity but does not cleave RNA and may target PP-1 to RNA-associated substrates. May also be involved in pre-mRNA splicing. Binds DNA and might act as a transcriptional repressor. Seems to be required for cell proliferation.</text>
</comment>
<comment type="subunit">
    <text evidence="1">Interacts with phosphorylated CDC5L, SF3B1 and MELK. Interacts with EED. Part of a complex consisting of PPP1R8, EED, HDAC2 and PP-1. Part of the spliceosome. Interacts with PPP1CA, PPP1CB and PPP1CC (By similarity).</text>
</comment>
<comment type="subcellular location">
    <subcellularLocation>
        <location evidence="1">Nucleus</location>
    </subcellularLocation>
    <subcellularLocation>
        <location evidence="1">Nucleus speckle</location>
    </subcellularLocation>
    <text evidence="6">Mainly, but not exclusively, nuclear.</text>
</comment>
<comment type="alternative products">
    <event type="alternative splicing"/>
    <isoform>
        <id>Q28147-1</id>
        <name>A</name>
        <sequence type="displayed"/>
    </isoform>
    <isoform>
        <id>Q28147-2</id>
        <name>B</name>
        <sequence type="described" ref="VSP_005118"/>
    </isoform>
</comment>
<comment type="domain">
    <text evidence="5">Has a basic N- and C-terminal and an acidic central domain.</text>
</comment>
<comment type="domain">
    <text evidence="1">The FHA domain mediates interactions with threonine-phosphorylated MELK.</text>
</comment>
<comment type="PTM">
    <text>The N-terminus is blocked.</text>
</comment>
<comment type="PTM">
    <text evidence="10 11 12">Inactivated by phosphorylation on Ser-199 or Ser-204.</text>
</comment>
<comment type="mass spectrometry">
    <text>Expressed in baculovirus.</text>
</comment>
<comment type="miscellaneous">
    <text>A synthetic peptide, NIPP-1(191-200), is able to inhibit PP-1. Alanine substitution of Val-201 and Phe-203 in NIPP-1(191-210) prevents PP-1 binding (far-western assay) but do not affect PP-1 inhibition. Phosphorylation of Ser-199 or Ser-204 prevents PP-1 binding (far-western assay) and reduces PP-1 inhibition.</text>
</comment>
<gene>
    <name type="primary">PPP1R8</name>
    <name type="synonym">NIPP1</name>
</gene>
<dbReference type="EMBL" id="Z50748">
    <property type="protein sequence ID" value="CAA90625.1"/>
    <property type="molecule type" value="mRNA"/>
</dbReference>
<dbReference type="PIR" id="I46033">
    <property type="entry name" value="I46033"/>
</dbReference>
<dbReference type="RefSeq" id="NP_777007.1">
    <molecule id="Q28147-1"/>
    <property type="nucleotide sequence ID" value="NM_174582.2"/>
</dbReference>
<dbReference type="BMRB" id="Q28147"/>
<dbReference type="SMR" id="Q28147"/>
<dbReference type="BioGRID" id="159581">
    <property type="interactions" value="5"/>
</dbReference>
<dbReference type="DIP" id="DIP-438N"/>
<dbReference type="FunCoup" id="Q28147">
    <property type="interactions" value="3406"/>
</dbReference>
<dbReference type="STRING" id="9913.ENSBTAP00000005043"/>
<dbReference type="iPTMnet" id="Q28147"/>
<dbReference type="PaxDb" id="9913-ENSBTAP00000005043"/>
<dbReference type="GeneID" id="282319"/>
<dbReference type="KEGG" id="bta:282319"/>
<dbReference type="CTD" id="5511"/>
<dbReference type="eggNOG" id="KOG1880">
    <property type="taxonomic scope" value="Eukaryota"/>
</dbReference>
<dbReference type="InParanoid" id="Q28147"/>
<dbReference type="OrthoDB" id="4096268at2759"/>
<dbReference type="Proteomes" id="UP000009136">
    <property type="component" value="Unplaced"/>
</dbReference>
<dbReference type="GO" id="GO:0016607">
    <property type="term" value="C:nuclear speck"/>
    <property type="evidence" value="ECO:0000318"/>
    <property type="project" value="GO_Central"/>
</dbReference>
<dbReference type="GO" id="GO:0005681">
    <property type="term" value="C:spliceosomal complex"/>
    <property type="evidence" value="ECO:0007669"/>
    <property type="project" value="UniProtKB-KW"/>
</dbReference>
<dbReference type="GO" id="GO:0003677">
    <property type="term" value="F:DNA binding"/>
    <property type="evidence" value="ECO:0007669"/>
    <property type="project" value="UniProtKB-KW"/>
</dbReference>
<dbReference type="GO" id="GO:0003729">
    <property type="term" value="F:mRNA binding"/>
    <property type="evidence" value="ECO:0000318"/>
    <property type="project" value="GO_Central"/>
</dbReference>
<dbReference type="GO" id="GO:0004865">
    <property type="term" value="F:protein serine/threonine phosphatase inhibitor activity"/>
    <property type="evidence" value="ECO:0000318"/>
    <property type="project" value="GO_Central"/>
</dbReference>
<dbReference type="GO" id="GO:0006397">
    <property type="term" value="P:mRNA processing"/>
    <property type="evidence" value="ECO:0007669"/>
    <property type="project" value="UniProtKB-KW"/>
</dbReference>
<dbReference type="GO" id="GO:0008380">
    <property type="term" value="P:RNA splicing"/>
    <property type="evidence" value="ECO:0007669"/>
    <property type="project" value="UniProtKB-KW"/>
</dbReference>
<dbReference type="CDD" id="cd22674">
    <property type="entry name" value="FHA_PPP1R8"/>
    <property type="match status" value="1"/>
</dbReference>
<dbReference type="FunFam" id="2.60.200.20:FF:000012">
    <property type="entry name" value="Nuclear inhibitor of protein phosphatase 1"/>
    <property type="match status" value="1"/>
</dbReference>
<dbReference type="Gene3D" id="2.60.200.20">
    <property type="match status" value="1"/>
</dbReference>
<dbReference type="Gene3D" id="6.10.250.1290">
    <property type="match status" value="1"/>
</dbReference>
<dbReference type="InterPro" id="IPR050923">
    <property type="entry name" value="Cell_Proc_Reg/RNA_Proc"/>
</dbReference>
<dbReference type="InterPro" id="IPR000253">
    <property type="entry name" value="FHA_dom"/>
</dbReference>
<dbReference type="InterPro" id="IPR008984">
    <property type="entry name" value="SMAD_FHA_dom_sf"/>
</dbReference>
<dbReference type="PANTHER" id="PTHR23308">
    <property type="entry name" value="NUCLEAR INHIBITOR OF PROTEIN PHOSPHATASE-1"/>
    <property type="match status" value="1"/>
</dbReference>
<dbReference type="Pfam" id="PF00498">
    <property type="entry name" value="FHA"/>
    <property type="match status" value="1"/>
</dbReference>
<dbReference type="SMART" id="SM00240">
    <property type="entry name" value="FHA"/>
    <property type="match status" value="1"/>
</dbReference>
<dbReference type="SUPFAM" id="SSF49879">
    <property type="entry name" value="SMAD/FHA domain"/>
    <property type="match status" value="1"/>
</dbReference>
<dbReference type="PROSITE" id="PS50006">
    <property type="entry name" value="FHA_DOMAIN"/>
    <property type="match status" value="1"/>
</dbReference>
<evidence type="ECO:0000250" key="1"/>
<evidence type="ECO:0000250" key="2">
    <source>
        <dbReference type="UniProtKB" id="Q12972"/>
    </source>
</evidence>
<evidence type="ECO:0000255" key="3">
    <source>
        <dbReference type="PROSITE-ProRule" id="PRU00086"/>
    </source>
</evidence>
<evidence type="ECO:0000256" key="4">
    <source>
        <dbReference type="SAM" id="MobiDB-lite"/>
    </source>
</evidence>
<evidence type="ECO:0000269" key="5">
    <source>
    </source>
</evidence>
<evidence type="ECO:0000269" key="6">
    <source>
    </source>
</evidence>
<evidence type="ECO:0000269" key="7">
    <source>
    </source>
</evidence>
<evidence type="ECO:0000269" key="8">
    <source>
    </source>
</evidence>
<evidence type="ECO:0000305" key="9"/>
<evidence type="ECO:0000305" key="10">
    <source>
    </source>
</evidence>
<evidence type="ECO:0000305" key="11">
    <source>
    </source>
</evidence>
<evidence type="ECO:0000305" key="12">
    <source>
    </source>
</evidence>
<accession>Q28147</accession>
<name>PP1R8_BOVIN</name>
<sequence>MAAAANSGSSLPLFDCPTWAGKPPPGLHLDVVKGDKLIEKLIIDEKKYYLFGRNPDLCDFTIDHQSCSRVHAALVYHKHLKRVFLIDLNSTHGTFLGHIRLEPHKPQQIPIDSTVSFGASTRAYTLREKPQTLPSAVKGDEKMGGEDDELKGLLGLPEEETELDNLTEFNTAHNKRISTLTIEEGNLDIQRPKRKRKNSRVTFSEDDEIINPEDVDPSVGRFRNMVQTAVVPVKKKRVEGPGSLVLEESGSRRMQNFAFSGGLYGGLPPTHSEAGSQPHGIHGTALIGGLPMPYPNLAPDVDLTPVVPSAVNMNPAPNPAVYNPEAVNEPKKKKYAKEAWPGKKPTPSLLI</sequence>
<feature type="chain" id="PRO_0000071504" description="Nuclear inhibitor of protein phosphatase 1">
    <location>
        <begin position="1"/>
        <end position="351"/>
    </location>
</feature>
<feature type="domain" description="FHA" evidence="3">
    <location>
        <begin position="49"/>
        <end position="101"/>
    </location>
</feature>
<feature type="region of interest" description="Interaction with CDC5L, SF3B1 and MELK" evidence="1">
    <location>
        <begin position="1"/>
        <end position="142"/>
    </location>
</feature>
<feature type="region of interest" description="Interaction with EED" evidence="1">
    <location>
        <begin position="143"/>
        <end position="224"/>
    </location>
</feature>
<feature type="region of interest" description="Involved in PP-1 inhibition">
    <location>
        <begin position="191"/>
        <end position="200"/>
    </location>
</feature>
<feature type="region of interest" description="Involved in PP-1 binding">
    <location>
        <begin position="200"/>
        <end position="203"/>
    </location>
</feature>
<feature type="region of interest" description="Interaction with EED" evidence="1">
    <location>
        <begin position="310"/>
        <end position="329"/>
    </location>
</feature>
<feature type="region of interest" description="Disordered" evidence="4">
    <location>
        <begin position="316"/>
        <end position="351"/>
    </location>
</feature>
<feature type="region of interest" description="RNA-binding" evidence="1">
    <location>
        <begin position="330"/>
        <end position="351"/>
    </location>
</feature>
<feature type="region of interest" description="Involved in PP-1 inhibition" evidence="1">
    <location>
        <begin position="331"/>
        <end position="337"/>
    </location>
</feature>
<feature type="short sequence motif" description="Nuclear localization signal 1" evidence="1">
    <location>
        <begin position="185"/>
        <end position="209"/>
    </location>
</feature>
<feature type="short sequence motif" description="Nuclear localization signal 2" evidence="1">
    <location>
        <begin position="210"/>
        <end position="240"/>
    </location>
</feature>
<feature type="site" description="Not phosphorylated" evidence="8">
    <location>
        <position position="202"/>
    </location>
</feature>
<feature type="site" description="Not phosphorylated" evidence="8">
    <location>
        <position position="346"/>
    </location>
</feature>
<feature type="modified residue" description="Phosphothreonine; by CK2; in vitro" evidence="8">
    <location>
        <position position="161"/>
    </location>
</feature>
<feature type="modified residue" description="Phosphoserine; by PKA; in vitro" evidence="8">
    <location>
        <position position="178"/>
    </location>
</feature>
<feature type="modified residue" description="Phosphoserine" evidence="6 8">
    <location>
        <position position="199"/>
    </location>
</feature>
<feature type="modified residue" description="Phosphoserine" evidence="10 12">
    <location>
        <position position="204"/>
    </location>
</feature>
<feature type="modified residue" description="Phosphoserine" evidence="2">
    <location>
        <position position="249"/>
    </location>
</feature>
<feature type="modified residue" description="Phosphotyrosine" evidence="2">
    <location>
        <position position="264"/>
    </location>
</feature>
<feature type="modified residue" description="Phosphotyrosine" evidence="2">
    <location>
        <position position="335"/>
    </location>
</feature>
<feature type="splice variant" id="VSP_005118" description="In isoform B." evidence="9">
    <location>
        <begin position="1"/>
        <end position="142"/>
    </location>
</feature>
<proteinExistence type="evidence at protein level"/>
<organism>
    <name type="scientific">Bos taurus</name>
    <name type="common">Bovine</name>
    <dbReference type="NCBI Taxonomy" id="9913"/>
    <lineage>
        <taxon>Eukaryota</taxon>
        <taxon>Metazoa</taxon>
        <taxon>Chordata</taxon>
        <taxon>Craniata</taxon>
        <taxon>Vertebrata</taxon>
        <taxon>Euteleostomi</taxon>
        <taxon>Mammalia</taxon>
        <taxon>Eutheria</taxon>
        <taxon>Laurasiatheria</taxon>
        <taxon>Artiodactyla</taxon>
        <taxon>Ruminantia</taxon>
        <taxon>Pecora</taxon>
        <taxon>Bovidae</taxon>
        <taxon>Bovinae</taxon>
        <taxon>Bos</taxon>
    </lineage>
</organism>
<keyword id="KW-0025">Alternative splicing</keyword>
<keyword id="KW-0903">Direct protein sequencing</keyword>
<keyword id="KW-0238">DNA-binding</keyword>
<keyword id="KW-0507">mRNA processing</keyword>
<keyword id="KW-0508">mRNA splicing</keyword>
<keyword id="KW-0539">Nucleus</keyword>
<keyword id="KW-0597">Phosphoprotein</keyword>
<keyword id="KW-0650">Protein phosphatase inhibitor</keyword>
<keyword id="KW-1185">Reference proteome</keyword>
<keyword id="KW-0678">Repressor</keyword>
<keyword id="KW-0694">RNA-binding</keyword>
<keyword id="KW-0747">Spliceosome</keyword>
<keyword id="KW-0804">Transcription</keyword>
<keyword id="KW-0805">Transcription regulation</keyword>